<organism>
    <name type="scientific">Neurospora crassa (strain ATCC 24698 / 74-OR23-1A / CBS 708.71 / DSM 1257 / FGSC 987)</name>
    <dbReference type="NCBI Taxonomy" id="367110"/>
    <lineage>
        <taxon>Eukaryota</taxon>
        <taxon>Fungi</taxon>
        <taxon>Dikarya</taxon>
        <taxon>Ascomycota</taxon>
        <taxon>Pezizomycotina</taxon>
        <taxon>Sordariomycetes</taxon>
        <taxon>Sordariomycetidae</taxon>
        <taxon>Sordariales</taxon>
        <taxon>Sordariaceae</taxon>
        <taxon>Neurospora</taxon>
    </lineage>
</organism>
<accession>Q7SH52</accession>
<accession>Q6MV15</accession>
<sequence>MLSTVHKAGRAPALLRHGRRVPVQASQLRALTSGAQNTSIFQTQANAAQRLSSQKRWLSASAAAAAASQPAPDAKAYIQSGVVKPRDHVDVKKVLVIGSGGLAIGQAGEFDYSGSQALKALKEAGVASVLINPNIATIQTNHSLADEVYYLPVTPEYVEYVIQREKPDGIFLSFGGQTALNLGVQMQKLGLFEKYGVKVLGTSVRTLELSEDRDLFAKALEEINIPIAKSFAVNTVDEALDAANKIGYPIIVRAAYALGGLGSGFANNEEELRNMAARSLTLSPQILVEKSLKGWKEVEYEVVRDANNNCITVCNMENFDPLGIHTGDSIVVAPSQTLSDEEYHMLRSAAIKIVRHLGVVGECNVQYALQPDGLDYRVIEVNARLSRSSALASKATGYPLAYTAAKIGLGHSLPELPNAVTKTTTANFEPSLDYIVTKIPRWDLSKFQHVKRDIGSAMKSVGEVMAIGRTFEESFQKAIRQVDPRFVGFQGDKFEDLDFELQNPTDRRWLAVGQAMLHENYSVDRVHELSKIDKWFLYKLQNIVDCQKEMQQLGSLEALKKEHILKAKKLGFSDKQIAMAVNSTEDLVRAARKGFGIRPWVKKIDTLAAEFPADTNYLYTTYNASSHDVTFEDKGTVILGSGVYRIGSSVEFDWCAVSATQALRAMGEKTVMINYNPETYSTDFDTADKLYFEELSYERVMDIYELESASGVVVSVGGQLPQNIALRLQETGKARVLGTDPRDIDRAEDRQKFSEILDSIGVDQPAWKELTSVEEAEKFAEEVGYPVLVRPSYVLSGAAMTVIRSKEDLKDKLEAAANVSPEHPVVITKFIEGAQEIDVDGVASEGNLILHAVSEHVEQAGVHSGDATLVLPPANLDQTTMDRVKEIAQKVAKAWRITGPFNMQIIKAEDPEGGLPALKVIECNLRASRSFPFVSKVLGVNFIDAATKALVGKNVPEPTDLMAVKRDYLATKVPQFSWTRLAGADPFLGVEMASTGEMACFGKDLVDAYWASLQSAMNFRVPEPGEGLLFGGDLSKSWLTTIVDYLSPLGYKLYAADNEVKQFLESSAKTKIDVEVIAFPTNDKRALREVFAKNNIRGVFNLAQARGKTVFDVDYVMRRNAVDFGVPLFMEPQTAMLFAQCMAEKLPRPEGIPSEVRRWSEFIGGKPL</sequence>
<protein>
    <recommendedName>
        <fullName evidence="14">Carbamoyl phosphate synthase arginine-specific large chain, mitochondrial</fullName>
        <shortName>CPS</shortName>
        <shortName>CPS-arg</shortName>
        <shortName>CPSase</shortName>
        <ecNumber>6.3.4.16</ecNumber>
        <ecNumber>6.3.5.5</ecNumber>
    </recommendedName>
    <alternativeName>
        <fullName>Ammonium-dependent carbamoyl phosphate synthetase</fullName>
    </alternativeName>
    <alternativeName>
        <fullName evidence="13">Arginine-specific carbamoyl phosphate synthetase, ammonia chain</fullName>
    </alternativeName>
    <alternativeName>
        <fullName>Carbamoyl phosphate synthase A</fullName>
        <shortName>CPS-A</shortName>
    </alternativeName>
    <alternativeName>
        <fullName>Glutamine-dependent carbamoyl phosphate synthetase</fullName>
    </alternativeName>
</protein>
<dbReference type="EC" id="6.3.4.16"/>
<dbReference type="EC" id="6.3.5.5"/>
<dbReference type="EMBL" id="BX842634">
    <property type="protein sequence ID" value="CAE76486.1"/>
    <property type="molecule type" value="Genomic_DNA"/>
</dbReference>
<dbReference type="EMBL" id="CM002236">
    <property type="protein sequence ID" value="EAA36214.1"/>
    <property type="molecule type" value="Genomic_DNA"/>
</dbReference>
<dbReference type="RefSeq" id="XP_965450.1">
    <property type="nucleotide sequence ID" value="XM_960357.3"/>
</dbReference>
<dbReference type="SMR" id="Q7SH52"/>
<dbReference type="FunCoup" id="Q7SH52">
    <property type="interactions" value="427"/>
</dbReference>
<dbReference type="STRING" id="367110.Q7SH52"/>
<dbReference type="PaxDb" id="5141-EFNCRP00000002184"/>
<dbReference type="EnsemblFungi" id="EAA36214">
    <property type="protein sequence ID" value="EAA36214"/>
    <property type="gene ID" value="NCU02677"/>
</dbReference>
<dbReference type="GeneID" id="3881616"/>
<dbReference type="KEGG" id="ncr:NCU02677"/>
<dbReference type="VEuPathDB" id="FungiDB:NCU02677"/>
<dbReference type="HOGENOM" id="CLU_000513_1_3_1"/>
<dbReference type="InParanoid" id="Q7SH52"/>
<dbReference type="OrthoDB" id="1924069at2759"/>
<dbReference type="UniPathway" id="UPA00068">
    <property type="reaction ID" value="UER00171"/>
</dbReference>
<dbReference type="Proteomes" id="UP000001805">
    <property type="component" value="Chromosome 1, Linkage Group I"/>
</dbReference>
<dbReference type="GO" id="GO:0005951">
    <property type="term" value="C:carbamoyl-phosphate synthase complex"/>
    <property type="evidence" value="ECO:0007669"/>
    <property type="project" value="EnsemblFungi"/>
</dbReference>
<dbReference type="GO" id="GO:0005737">
    <property type="term" value="C:cytoplasm"/>
    <property type="evidence" value="ECO:0000318"/>
    <property type="project" value="GO_Central"/>
</dbReference>
<dbReference type="GO" id="GO:0005759">
    <property type="term" value="C:mitochondrial matrix"/>
    <property type="evidence" value="ECO:0007669"/>
    <property type="project" value="UniProtKB-SubCell"/>
</dbReference>
<dbReference type="GO" id="GO:0005524">
    <property type="term" value="F:ATP binding"/>
    <property type="evidence" value="ECO:0007669"/>
    <property type="project" value="UniProtKB-KW"/>
</dbReference>
<dbReference type="GO" id="GO:0004087">
    <property type="term" value="F:carbamoyl-phosphate synthase (ammonia) activity"/>
    <property type="evidence" value="ECO:0000318"/>
    <property type="project" value="GO_Central"/>
</dbReference>
<dbReference type="GO" id="GO:0004088">
    <property type="term" value="F:carbamoyl-phosphate synthase (glutamine-hydrolyzing) activity"/>
    <property type="evidence" value="ECO:0007669"/>
    <property type="project" value="EnsemblFungi"/>
</dbReference>
<dbReference type="GO" id="GO:0046872">
    <property type="term" value="F:metal ion binding"/>
    <property type="evidence" value="ECO:0007669"/>
    <property type="project" value="UniProtKB-KW"/>
</dbReference>
<dbReference type="GO" id="GO:0006526">
    <property type="term" value="P:L-arginine biosynthetic process"/>
    <property type="evidence" value="ECO:0000318"/>
    <property type="project" value="GO_Central"/>
</dbReference>
<dbReference type="GO" id="GO:0006221">
    <property type="term" value="P:pyrimidine nucleotide biosynthetic process"/>
    <property type="evidence" value="ECO:0007669"/>
    <property type="project" value="EnsemblFungi"/>
</dbReference>
<dbReference type="CDD" id="cd01423">
    <property type="entry name" value="MGS_CPS_I_III"/>
    <property type="match status" value="1"/>
</dbReference>
<dbReference type="FunFam" id="3.30.470.20:FF:000004">
    <property type="entry name" value="Carbamoyl-phosphate synthase (glutamine-hydrolyzing)"/>
    <property type="match status" value="1"/>
</dbReference>
<dbReference type="FunFam" id="3.40.50.1380:FF:000015">
    <property type="entry name" value="Carbamoyl-phosphate synthase arginine-specific large chain"/>
    <property type="match status" value="1"/>
</dbReference>
<dbReference type="FunFam" id="1.10.1030.10:FF:000001">
    <property type="entry name" value="Carbamoyl-phosphate synthase large chain"/>
    <property type="match status" value="1"/>
</dbReference>
<dbReference type="FunFam" id="3.30.1490.20:FF:000001">
    <property type="entry name" value="Carbamoyl-phosphate synthase large chain"/>
    <property type="match status" value="1"/>
</dbReference>
<dbReference type="FunFam" id="3.30.470.20:FF:000001">
    <property type="entry name" value="Carbamoyl-phosphate synthase large chain"/>
    <property type="match status" value="1"/>
</dbReference>
<dbReference type="FunFam" id="3.40.50.20:FF:000001">
    <property type="entry name" value="Carbamoyl-phosphate synthase large chain"/>
    <property type="match status" value="1"/>
</dbReference>
<dbReference type="FunFam" id="3.40.50.20:FF:000002">
    <property type="entry name" value="Carbamoyl-phosphate synthase large chain"/>
    <property type="match status" value="1"/>
</dbReference>
<dbReference type="Gene3D" id="3.40.50.20">
    <property type="match status" value="2"/>
</dbReference>
<dbReference type="Gene3D" id="3.30.1490.20">
    <property type="entry name" value="ATP-grasp fold, A domain"/>
    <property type="match status" value="1"/>
</dbReference>
<dbReference type="Gene3D" id="3.30.470.20">
    <property type="entry name" value="ATP-grasp fold, B domain"/>
    <property type="match status" value="2"/>
</dbReference>
<dbReference type="Gene3D" id="1.10.1030.10">
    <property type="entry name" value="Carbamoyl-phosphate synthetase, large subunit oligomerisation domain"/>
    <property type="match status" value="1"/>
</dbReference>
<dbReference type="Gene3D" id="3.40.50.1380">
    <property type="entry name" value="Methylglyoxal synthase-like domain"/>
    <property type="match status" value="1"/>
</dbReference>
<dbReference type="InterPro" id="IPR011761">
    <property type="entry name" value="ATP-grasp"/>
</dbReference>
<dbReference type="InterPro" id="IPR013815">
    <property type="entry name" value="ATP_grasp_subdomain_1"/>
</dbReference>
<dbReference type="InterPro" id="IPR006275">
    <property type="entry name" value="CarbamoylP_synth_lsu"/>
</dbReference>
<dbReference type="InterPro" id="IPR005480">
    <property type="entry name" value="CarbamoylP_synth_lsu_oligo"/>
</dbReference>
<dbReference type="InterPro" id="IPR036897">
    <property type="entry name" value="CarbamoylP_synth_lsu_oligo_sf"/>
</dbReference>
<dbReference type="InterPro" id="IPR005479">
    <property type="entry name" value="CbamoylP_synth_lsu-like_ATP-bd"/>
</dbReference>
<dbReference type="InterPro" id="IPR005483">
    <property type="entry name" value="CbamoylP_synth_lsu_CPSase_dom"/>
</dbReference>
<dbReference type="InterPro" id="IPR011607">
    <property type="entry name" value="MGS-like_dom"/>
</dbReference>
<dbReference type="InterPro" id="IPR036914">
    <property type="entry name" value="MGS-like_dom_sf"/>
</dbReference>
<dbReference type="InterPro" id="IPR016185">
    <property type="entry name" value="PreATP-grasp_dom_sf"/>
</dbReference>
<dbReference type="NCBIfam" id="TIGR01369">
    <property type="entry name" value="CPSaseII_lrg"/>
    <property type="match status" value="1"/>
</dbReference>
<dbReference type="NCBIfam" id="NF003671">
    <property type="entry name" value="PRK05294.1"/>
    <property type="match status" value="1"/>
</dbReference>
<dbReference type="NCBIfam" id="NF009455">
    <property type="entry name" value="PRK12815.1"/>
    <property type="match status" value="1"/>
</dbReference>
<dbReference type="PANTHER" id="PTHR11405:SF53">
    <property type="entry name" value="CARBAMOYL-PHOSPHATE SYNTHASE [AMMONIA], MITOCHONDRIAL"/>
    <property type="match status" value="1"/>
</dbReference>
<dbReference type="PANTHER" id="PTHR11405">
    <property type="entry name" value="CARBAMOYLTRANSFERASE FAMILY MEMBER"/>
    <property type="match status" value="1"/>
</dbReference>
<dbReference type="Pfam" id="PF02786">
    <property type="entry name" value="CPSase_L_D2"/>
    <property type="match status" value="2"/>
</dbReference>
<dbReference type="Pfam" id="PF02787">
    <property type="entry name" value="CPSase_L_D3"/>
    <property type="match status" value="1"/>
</dbReference>
<dbReference type="PRINTS" id="PR00098">
    <property type="entry name" value="CPSASE"/>
</dbReference>
<dbReference type="SMART" id="SM01096">
    <property type="entry name" value="CPSase_L_D3"/>
    <property type="match status" value="1"/>
</dbReference>
<dbReference type="SUPFAM" id="SSF48108">
    <property type="entry name" value="Carbamoyl phosphate synthetase, large subunit connection domain"/>
    <property type="match status" value="1"/>
</dbReference>
<dbReference type="SUPFAM" id="SSF56059">
    <property type="entry name" value="Glutathione synthetase ATP-binding domain-like"/>
    <property type="match status" value="2"/>
</dbReference>
<dbReference type="SUPFAM" id="SSF52335">
    <property type="entry name" value="Methylglyoxal synthase-like"/>
    <property type="match status" value="1"/>
</dbReference>
<dbReference type="SUPFAM" id="SSF52440">
    <property type="entry name" value="PreATP-grasp domain"/>
    <property type="match status" value="2"/>
</dbReference>
<dbReference type="PROSITE" id="PS50975">
    <property type="entry name" value="ATP_GRASP"/>
    <property type="match status" value="2"/>
</dbReference>
<dbReference type="PROSITE" id="PS00866">
    <property type="entry name" value="CPSASE_1"/>
    <property type="match status" value="2"/>
</dbReference>
<dbReference type="PROSITE" id="PS00867">
    <property type="entry name" value="CPSASE_2"/>
    <property type="match status" value="2"/>
</dbReference>
<dbReference type="PROSITE" id="PS51855">
    <property type="entry name" value="MGS"/>
    <property type="match status" value="1"/>
</dbReference>
<evidence type="ECO:0000250" key="1">
    <source>
        <dbReference type="UniProtKB" id="P00968"/>
    </source>
</evidence>
<evidence type="ECO:0000250" key="2">
    <source>
        <dbReference type="UniProtKB" id="P03965"/>
    </source>
</evidence>
<evidence type="ECO:0000255" key="3"/>
<evidence type="ECO:0000255" key="4">
    <source>
        <dbReference type="PROSITE-ProRule" id="PRU00409"/>
    </source>
</evidence>
<evidence type="ECO:0000255" key="5">
    <source>
        <dbReference type="PROSITE-ProRule" id="PRU01202"/>
    </source>
</evidence>
<evidence type="ECO:0000269" key="6">
    <source>
    </source>
</evidence>
<evidence type="ECO:0000269" key="7">
    <source>
    </source>
</evidence>
<evidence type="ECO:0000269" key="8">
    <source>
    </source>
</evidence>
<evidence type="ECO:0000269" key="9">
    <source>
    </source>
</evidence>
<evidence type="ECO:0000269" key="10">
    <source>
    </source>
</evidence>
<evidence type="ECO:0000269" key="11">
    <source>
    </source>
</evidence>
<evidence type="ECO:0000269" key="12">
    <source ref="5"/>
</evidence>
<evidence type="ECO:0000303" key="13">
    <source>
    </source>
</evidence>
<evidence type="ECO:0000305" key="14"/>
<evidence type="ECO:0000305" key="15">
    <source>
    </source>
</evidence>
<evidence type="ECO:0000305" key="16">
    <source>
    </source>
</evidence>
<evidence type="ECO:0000305" key="17">
    <source>
    </source>
</evidence>
<evidence type="ECO:0000305" key="18">
    <source>
    </source>
</evidence>
<proteinExistence type="evidence at protein level"/>
<feature type="transit peptide" description="Mitochondrion" evidence="3">
    <location>
        <begin position="1"/>
        <end position="51"/>
    </location>
</feature>
<feature type="chain" id="PRO_0000459175" description="Carbamoyl phosphate synthase arginine-specific large chain, mitochondrial" evidence="3">
    <location>
        <begin position="52"/>
        <end position="1168"/>
    </location>
</feature>
<feature type="domain" description="ATP-grasp 1" evidence="4">
    <location>
        <begin position="217"/>
        <end position="409"/>
    </location>
</feature>
<feature type="domain" description="ATP-grasp 2" evidence="4">
    <location>
        <begin position="754"/>
        <end position="951"/>
    </location>
</feature>
<feature type="domain" description="MGS-like" evidence="5">
    <location>
        <begin position="1019"/>
        <end position="1168"/>
    </location>
</feature>
<feature type="region of interest" description="Carboxyphosphate synthetic domain" evidence="1">
    <location>
        <begin position="86"/>
        <end position="483"/>
    </location>
</feature>
<feature type="region of interest" description="Oligomerization domain" evidence="1">
    <location>
        <begin position="484"/>
        <end position="628"/>
    </location>
</feature>
<feature type="region of interest" description="Carbamoyl phosphate synthetic domain" evidence="1">
    <location>
        <begin position="629"/>
        <end position="1017"/>
    </location>
</feature>
<feature type="region of interest" description="Allosteric domain" evidence="1">
    <location>
        <begin position="1018"/>
        <end position="1152"/>
    </location>
</feature>
<feature type="binding site" evidence="1">
    <location>
        <position position="213"/>
    </location>
    <ligand>
        <name>ATP</name>
        <dbReference type="ChEBI" id="CHEBI:30616"/>
        <label>1</label>
    </ligand>
</feature>
<feature type="binding site" evidence="4">
    <location>
        <begin position="243"/>
        <end position="298"/>
    </location>
    <ligand>
        <name>ATP</name>
        <dbReference type="ChEBI" id="CHEBI:30616"/>
    </ligand>
</feature>
<feature type="binding site" evidence="1">
    <location>
        <position position="253"/>
    </location>
    <ligand>
        <name>ATP</name>
        <dbReference type="ChEBI" id="CHEBI:30616"/>
        <label>1</label>
    </ligand>
</feature>
<feature type="binding site" evidence="1">
    <location>
        <position position="259"/>
    </location>
    <ligand>
        <name>ATP</name>
        <dbReference type="ChEBI" id="CHEBI:30616"/>
        <label>1</label>
    </ligand>
</feature>
<feature type="binding site" evidence="1">
    <location>
        <position position="260"/>
    </location>
    <ligand>
        <name>ATP</name>
        <dbReference type="ChEBI" id="CHEBI:30616"/>
        <label>1</label>
    </ligand>
</feature>
<feature type="binding site" evidence="1">
    <location>
        <position position="290"/>
    </location>
    <ligand>
        <name>ATP</name>
        <dbReference type="ChEBI" id="CHEBI:30616"/>
        <label>1</label>
    </ligand>
</feature>
<feature type="binding site" evidence="1">
    <location>
        <position position="292"/>
    </location>
    <ligand>
        <name>ATP</name>
        <dbReference type="ChEBI" id="CHEBI:30616"/>
        <label>1</label>
    </ligand>
</feature>
<feature type="binding site" evidence="1">
    <location>
        <position position="297"/>
    </location>
    <ligand>
        <name>ATP</name>
        <dbReference type="ChEBI" id="CHEBI:30616"/>
        <label>1</label>
    </ligand>
</feature>
<feature type="binding site" evidence="1">
    <location>
        <position position="323"/>
    </location>
    <ligand>
        <name>ATP</name>
        <dbReference type="ChEBI" id="CHEBI:30616"/>
        <label>1</label>
    </ligand>
</feature>
<feature type="binding site" evidence="1">
    <location>
        <position position="324"/>
    </location>
    <ligand>
        <name>ATP</name>
        <dbReference type="ChEBI" id="CHEBI:30616"/>
        <label>1</label>
    </ligand>
</feature>
<feature type="binding site" evidence="1">
    <location>
        <position position="325"/>
    </location>
    <ligand>
        <name>ATP</name>
        <dbReference type="ChEBI" id="CHEBI:30616"/>
        <label>1</label>
    </ligand>
</feature>
<feature type="binding site" evidence="1">
    <location>
        <position position="366"/>
    </location>
    <ligand>
        <name>ATP</name>
        <dbReference type="ChEBI" id="CHEBI:30616"/>
        <label>1</label>
    </ligand>
</feature>
<feature type="binding site" evidence="4">
    <location>
        <position position="366"/>
    </location>
    <ligand>
        <name>Mg(2+)</name>
        <dbReference type="ChEBI" id="CHEBI:18420"/>
        <label>1</label>
    </ligand>
</feature>
<feature type="binding site" evidence="4">
    <location>
        <position position="366"/>
    </location>
    <ligand>
        <name>Mn(2+)</name>
        <dbReference type="ChEBI" id="CHEBI:29035"/>
        <label>1</label>
    </ligand>
</feature>
<feature type="binding site" evidence="1">
    <location>
        <position position="380"/>
    </location>
    <ligand>
        <name>ATP</name>
        <dbReference type="ChEBI" id="CHEBI:30616"/>
        <label>1</label>
    </ligand>
</feature>
<feature type="binding site" evidence="4">
    <location>
        <position position="380"/>
    </location>
    <ligand>
        <name>Mg(2+)</name>
        <dbReference type="ChEBI" id="CHEBI:18420"/>
        <label>1</label>
    </ligand>
</feature>
<feature type="binding site" evidence="4">
    <location>
        <position position="380"/>
    </location>
    <ligand>
        <name>Mg(2+)</name>
        <dbReference type="ChEBI" id="CHEBI:18420"/>
        <label>2</label>
    </ligand>
</feature>
<feature type="binding site" evidence="4">
    <location>
        <position position="380"/>
    </location>
    <ligand>
        <name>Mn(2+)</name>
        <dbReference type="ChEBI" id="CHEBI:29035"/>
        <label>1</label>
    </ligand>
</feature>
<feature type="binding site" evidence="4">
    <location>
        <position position="380"/>
    </location>
    <ligand>
        <name>Mn(2+)</name>
        <dbReference type="ChEBI" id="CHEBI:29035"/>
        <label>2</label>
    </ligand>
</feature>
<feature type="binding site" evidence="4">
    <location>
        <position position="382"/>
    </location>
    <ligand>
        <name>Mg(2+)</name>
        <dbReference type="ChEBI" id="CHEBI:18420"/>
        <label>2</label>
    </ligand>
</feature>
<feature type="binding site" evidence="4">
    <location>
        <position position="382"/>
    </location>
    <ligand>
        <name>Mn(2+)</name>
        <dbReference type="ChEBI" id="CHEBI:29035"/>
        <label>2</label>
    </ligand>
</feature>
<feature type="binding site" evidence="4">
    <location>
        <begin position="780"/>
        <end position="837"/>
    </location>
    <ligand>
        <name>ATP</name>
        <dbReference type="ChEBI" id="CHEBI:30616"/>
    </ligand>
</feature>
<feature type="binding site" evidence="1">
    <location>
        <position position="790"/>
    </location>
    <ligand>
        <name>ATP</name>
        <dbReference type="ChEBI" id="CHEBI:30616"/>
        <label>2</label>
    </ligand>
</feature>
<feature type="binding site" evidence="1">
    <location>
        <position position="829"/>
    </location>
    <ligand>
        <name>ATP</name>
        <dbReference type="ChEBI" id="CHEBI:30616"/>
        <label>2</label>
    </ligand>
</feature>
<feature type="binding site" evidence="1">
    <location>
        <position position="831"/>
    </location>
    <ligand>
        <name>ATP</name>
        <dbReference type="ChEBI" id="CHEBI:30616"/>
        <label>2</label>
    </ligand>
</feature>
<feature type="binding site" evidence="1">
    <location>
        <position position="836"/>
    </location>
    <ligand>
        <name>ATP</name>
        <dbReference type="ChEBI" id="CHEBI:30616"/>
        <label>2</label>
    </ligand>
</feature>
<feature type="binding site" evidence="1">
    <location>
        <position position="861"/>
    </location>
    <ligand>
        <name>ATP</name>
        <dbReference type="ChEBI" id="CHEBI:30616"/>
        <label>2</label>
    </ligand>
</feature>
<feature type="binding site" evidence="1">
    <location>
        <position position="862"/>
    </location>
    <ligand>
        <name>ATP</name>
        <dbReference type="ChEBI" id="CHEBI:30616"/>
        <label>2</label>
    </ligand>
</feature>
<feature type="binding site" evidence="1">
    <location>
        <position position="863"/>
    </location>
    <ligand>
        <name>ATP</name>
        <dbReference type="ChEBI" id="CHEBI:30616"/>
        <label>2</label>
    </ligand>
</feature>
<feature type="binding site" evidence="1">
    <location>
        <position position="864"/>
    </location>
    <ligand>
        <name>ATP</name>
        <dbReference type="ChEBI" id="CHEBI:30616"/>
        <label>2</label>
    </ligand>
</feature>
<feature type="binding site" evidence="1">
    <location>
        <position position="904"/>
    </location>
    <ligand>
        <name>ATP</name>
        <dbReference type="ChEBI" id="CHEBI:30616"/>
        <label>2</label>
    </ligand>
</feature>
<feature type="binding site" evidence="4">
    <location>
        <position position="904"/>
    </location>
    <ligand>
        <name>Mg(2+)</name>
        <dbReference type="ChEBI" id="CHEBI:18420"/>
        <label>3</label>
    </ligand>
</feature>
<feature type="binding site" evidence="4">
    <location>
        <position position="904"/>
    </location>
    <ligand>
        <name>Mn(2+)</name>
        <dbReference type="ChEBI" id="CHEBI:29035"/>
        <label>3</label>
    </ligand>
</feature>
<feature type="binding site" evidence="1">
    <location>
        <position position="922"/>
    </location>
    <ligand>
        <name>ATP</name>
        <dbReference type="ChEBI" id="CHEBI:30616"/>
        <label>2</label>
    </ligand>
</feature>
<feature type="binding site" evidence="4">
    <location>
        <position position="922"/>
    </location>
    <ligand>
        <name>Mg(2+)</name>
        <dbReference type="ChEBI" id="CHEBI:18420"/>
        <label>3</label>
    </ligand>
</feature>
<feature type="binding site" evidence="4">
    <location>
        <position position="922"/>
    </location>
    <ligand>
        <name>Mg(2+)</name>
        <dbReference type="ChEBI" id="CHEBI:18420"/>
        <label>4</label>
    </ligand>
</feature>
<feature type="binding site" evidence="4">
    <location>
        <position position="922"/>
    </location>
    <ligand>
        <name>Mn(2+)</name>
        <dbReference type="ChEBI" id="CHEBI:29035"/>
        <label>3</label>
    </ligand>
</feature>
<feature type="binding site" evidence="4">
    <location>
        <position position="922"/>
    </location>
    <ligand>
        <name>Mn(2+)</name>
        <dbReference type="ChEBI" id="CHEBI:29035"/>
        <label>4</label>
    </ligand>
</feature>
<feature type="binding site" evidence="4">
    <location>
        <position position="924"/>
    </location>
    <ligand>
        <name>Mg(2+)</name>
        <dbReference type="ChEBI" id="CHEBI:18420"/>
        <label>4</label>
    </ligand>
</feature>
<feature type="binding site" evidence="4">
    <location>
        <position position="924"/>
    </location>
    <ligand>
        <name>Mn(2+)</name>
        <dbReference type="ChEBI" id="CHEBI:29035"/>
        <label>4</label>
    </ligand>
</feature>
<name>CARB_NEUCR</name>
<gene>
    <name type="primary">arg-3</name>
    <name type="synonym">cit-1</name>
    <name type="ORF">B16B8.260</name>
    <name type="ORF">NCU02677</name>
</gene>
<keyword id="KW-0067">ATP-binding</keyword>
<keyword id="KW-0436">Ligase</keyword>
<keyword id="KW-0460">Magnesium</keyword>
<keyword id="KW-0464">Manganese</keyword>
<keyword id="KW-0479">Metal-binding</keyword>
<keyword id="KW-0496">Mitochondrion</keyword>
<keyword id="KW-0547">Nucleotide-binding</keyword>
<keyword id="KW-1185">Reference proteome</keyword>
<keyword id="KW-0677">Repeat</keyword>
<keyword id="KW-0809">Transit peptide</keyword>
<reference key="1">
    <citation type="journal article" date="2003" name="Nucleic Acids Res.">
        <title>What's in the genome of a filamentous fungus? Analysis of the Neurospora genome sequence.</title>
        <authorList>
            <person name="Mannhaupt G."/>
            <person name="Montrone C."/>
            <person name="Haase D."/>
            <person name="Mewes H.-W."/>
            <person name="Aign V."/>
            <person name="Hoheisel J.D."/>
            <person name="Fartmann B."/>
            <person name="Nyakatura G."/>
            <person name="Kempken F."/>
            <person name="Maier J."/>
            <person name="Schulte U."/>
        </authorList>
    </citation>
    <scope>NUCLEOTIDE SEQUENCE [LARGE SCALE GENOMIC DNA]</scope>
    <source>
        <strain>ATCC 24698 / 74-OR23-1A / CBS 708.71 / DSM 1257 / FGSC 987</strain>
    </source>
</reference>
<reference key="2">
    <citation type="journal article" date="2003" name="Nature">
        <title>The genome sequence of the filamentous fungus Neurospora crassa.</title>
        <authorList>
            <person name="Galagan J.E."/>
            <person name="Calvo S.E."/>
            <person name="Borkovich K.A."/>
            <person name="Selker E.U."/>
            <person name="Read N.D."/>
            <person name="Jaffe D.B."/>
            <person name="FitzHugh W."/>
            <person name="Ma L.-J."/>
            <person name="Smirnov S."/>
            <person name="Purcell S."/>
            <person name="Rehman B."/>
            <person name="Elkins T."/>
            <person name="Engels R."/>
            <person name="Wang S."/>
            <person name="Nielsen C.B."/>
            <person name="Butler J."/>
            <person name="Endrizzi M."/>
            <person name="Qui D."/>
            <person name="Ianakiev P."/>
            <person name="Bell-Pedersen D."/>
            <person name="Nelson M.A."/>
            <person name="Werner-Washburne M."/>
            <person name="Selitrennikoff C.P."/>
            <person name="Kinsey J.A."/>
            <person name="Braun E.L."/>
            <person name="Zelter A."/>
            <person name="Schulte U."/>
            <person name="Kothe G.O."/>
            <person name="Jedd G."/>
            <person name="Mewes H.-W."/>
            <person name="Staben C."/>
            <person name="Marcotte E."/>
            <person name="Greenberg D."/>
            <person name="Roy A."/>
            <person name="Foley K."/>
            <person name="Naylor J."/>
            <person name="Stange-Thomann N."/>
            <person name="Barrett R."/>
            <person name="Gnerre S."/>
            <person name="Kamal M."/>
            <person name="Kamvysselis M."/>
            <person name="Mauceli E.W."/>
            <person name="Bielke C."/>
            <person name="Rudd S."/>
            <person name="Frishman D."/>
            <person name="Krystofova S."/>
            <person name="Rasmussen C."/>
            <person name="Metzenberg R.L."/>
            <person name="Perkins D.D."/>
            <person name="Kroken S."/>
            <person name="Cogoni C."/>
            <person name="Macino G."/>
            <person name="Catcheside D.E.A."/>
            <person name="Li W."/>
            <person name="Pratt R.J."/>
            <person name="Osmani S.A."/>
            <person name="DeSouza C.P.C."/>
            <person name="Glass N.L."/>
            <person name="Orbach M.J."/>
            <person name="Berglund J.A."/>
            <person name="Voelker R."/>
            <person name="Yarden O."/>
            <person name="Plamann M."/>
            <person name="Seiler S."/>
            <person name="Dunlap J.C."/>
            <person name="Radford A."/>
            <person name="Aramayo R."/>
            <person name="Natvig D.O."/>
            <person name="Alex L.A."/>
            <person name="Mannhaupt G."/>
            <person name="Ebbole D.J."/>
            <person name="Freitag M."/>
            <person name="Paulsen I."/>
            <person name="Sachs M.S."/>
            <person name="Lander E.S."/>
            <person name="Nusbaum C."/>
            <person name="Birren B.W."/>
        </authorList>
    </citation>
    <scope>NUCLEOTIDE SEQUENCE [LARGE SCALE GENOMIC DNA]</scope>
    <source>
        <strain>ATCC 24698 / 74-OR23-1A / CBS 708.71 / DSM 1257 / FGSC 987</strain>
    </source>
</reference>
<reference key="3">
    <citation type="journal article" date="1965" name="Biochim. Biophys. Acta">
        <title>Carbamyl phosphate synthesis in Neurospora crassa. I. Preliminary characterization of arginine-specific carbamyl phosphokinase.</title>
        <authorList>
            <person name="Davis R.H."/>
        </authorList>
    </citation>
    <scope>FUNCTION</scope>
    <scope>CATALYTIC ACTIVITY</scope>
    <scope>BIOPHYSICOCHEMICAL PROPERTIES</scope>
</reference>
<reference key="4">
    <citation type="journal article" date="1965" name="Biochim. Biophys. Acta">
        <title>Carbamyl phosphate synthesis in Neurospora crassa. II. Genetics, metabolic position, and regulation of arginine-specific carbamyl phosphokinase.</title>
        <authorList>
            <person name="Davis R.H."/>
        </authorList>
    </citation>
    <scope>FUNCTION</scope>
    <scope>PATHWAY</scope>
</reference>
<reference key="5">
    <citation type="book" date="1967" name="Organisational biosynthesis">
        <title>Channeling in Neurospora metabolism.</title>
        <editorList>
            <person name="Vogel H.J."/>
            <person name="Lamper L.O."/>
            <person name="Bryson V."/>
        </editorList>
        <authorList>
            <person name="Davis R.H."/>
        </authorList>
    </citation>
    <scope>FUNCTION</scope>
    <scope>CATALYTIC ACTIVITY</scope>
</reference>
<reference key="6">
    <citation type="journal article" date="1971" name="J. Biol. Chem.">
        <title>Evidence for two discrete carbamyl phosphate pools in Neurospora.</title>
        <authorList>
            <person name="Williams L.G."/>
            <person name="Bernhardt S.A."/>
            <person name="Davis R.H."/>
        </authorList>
    </citation>
    <scope>FUNCTION</scope>
</reference>
<reference key="7">
    <citation type="journal article" date="1972" name="Science">
        <title>Metabolite distribution in cells.</title>
        <authorList>
            <person name="Davis R.H."/>
        </authorList>
    </citation>
    <scope>FUNCTION</scope>
</reference>
<reference key="8">
    <citation type="journal article" date="1973" name="Science">
        <authorList>
            <person name="Davis R.H."/>
        </authorList>
    </citation>
    <scope>ERRATUM OF PUBMED:5085981</scope>
</reference>
<reference key="9">
    <citation type="journal article" date="1973" name="J. Biol. Chem.">
        <title>Intracellular localization of enzymes of arginine metabolism in Neurospora.</title>
        <authorList>
            <person name="Weiss R.L."/>
            <person name="Davis R.H."/>
        </authorList>
    </citation>
    <scope>SUBCELLULAR LOCATION</scope>
</reference>
<reference key="10">
    <citation type="journal article" date="1980" name="J. Bacteriol.">
        <title>Carbamyl phosphate synthetase A of Neurospora crassa.</title>
        <authorList>
            <person name="Davis R.H."/>
            <person name="Ristow J.L."/>
            <person name="Hanson B.A."/>
        </authorList>
    </citation>
    <scope>CATALYTIC ACTIVITY</scope>
    <scope>BIOPHYSICOCHEMICAL PROPERTIES</scope>
    <scope>SUBCELLULAR LOCATION</scope>
</reference>
<reference key="11">
    <citation type="journal article" date="1981" name="Mol. Gen. Genet.">
        <title>Independent localization and regulation of carbamyl phosphate synthetase A polypeptides of Neurospora crassa.</title>
        <authorList>
            <person name="Davis R.H."/>
            <person name="Ristow J.L."/>
            <person name="Ginsburgh C.L."/>
        </authorList>
    </citation>
    <scope>SUBUNIT</scope>
    <scope>SUBCELLULAR LOCATION</scope>
</reference>
<reference key="12">
    <citation type="journal article" date="1987" name="J. Biol. Chem.">
        <title>Arginine-specific carbamoyl phosphate metabolism in mitochondria of Neurospora crassa. Channeling and control by arginine.</title>
        <authorList>
            <person name="Davis R.H."/>
            <person name="Ristow J.L."/>
        </authorList>
    </citation>
    <scope>FUNCTION</scope>
</reference>
<comment type="function">
    <text evidence="7 8 9 12">Large subunit of the arginine-specific carbamoyl phosphate synthase (CPSase). CPSase catalyzes the formation of carbamoyl phosphate from the ammonia moiety of glutamine, hydrogencarbonate, and phosphate donated by ATP, the first step of the arginine biosynthetic pathway. The large subunit (synthetase) binds the substrates ammonia (free or transferred from glutamine from the small subunit), hydrogencarbonate and ATP and carries out an ATP-coupled ligase reaction, activating hydrogencarbonate by forming carboxy phosphate which reacts with ammonia to form carbamoyl phosphate.</text>
</comment>
<comment type="catalytic activity">
    <reaction evidence="10 12">
        <text>hydrogencarbonate + L-glutamine + 2 ATP + H2O = carbamoyl phosphate + L-glutamate + 2 ADP + phosphate + 2 H(+)</text>
        <dbReference type="Rhea" id="RHEA:18633"/>
        <dbReference type="ChEBI" id="CHEBI:15377"/>
        <dbReference type="ChEBI" id="CHEBI:15378"/>
        <dbReference type="ChEBI" id="CHEBI:17544"/>
        <dbReference type="ChEBI" id="CHEBI:29985"/>
        <dbReference type="ChEBI" id="CHEBI:30616"/>
        <dbReference type="ChEBI" id="CHEBI:43474"/>
        <dbReference type="ChEBI" id="CHEBI:58228"/>
        <dbReference type="ChEBI" id="CHEBI:58359"/>
        <dbReference type="ChEBI" id="CHEBI:456216"/>
        <dbReference type="EC" id="6.3.5.5"/>
    </reaction>
</comment>
<comment type="catalytic activity">
    <molecule>Carbamoyl phosphate synthase arginine-specific large chain, mitochondrial</molecule>
    <reaction evidence="8 10">
        <text>hydrogencarbonate + NH4(+) + 2 ATP = carbamoyl phosphate + 2 ADP + phosphate + 2 H(+)</text>
        <dbReference type="Rhea" id="RHEA:18029"/>
        <dbReference type="ChEBI" id="CHEBI:15378"/>
        <dbReference type="ChEBI" id="CHEBI:17544"/>
        <dbReference type="ChEBI" id="CHEBI:28938"/>
        <dbReference type="ChEBI" id="CHEBI:30616"/>
        <dbReference type="ChEBI" id="CHEBI:43474"/>
        <dbReference type="ChEBI" id="CHEBI:58228"/>
        <dbReference type="ChEBI" id="CHEBI:456216"/>
        <dbReference type="EC" id="6.3.4.16"/>
    </reaction>
</comment>
<comment type="cofactor">
    <cofactor evidence="4">
        <name>Mg(2+)</name>
        <dbReference type="ChEBI" id="CHEBI:18420"/>
    </cofactor>
    <cofactor evidence="4">
        <name>Mn(2+)</name>
        <dbReference type="ChEBI" id="CHEBI:29035"/>
    </cofactor>
    <text evidence="4">Binds 4 Mg(2+) or Mn(2+) ions per subunit.</text>
</comment>
<comment type="biophysicochemical properties">
    <kinetics>
        <KM evidence="8">1 mM for ATP</KM>
        <KM evidence="8 10">16 mM for NH4(+)</KM>
        <KM evidence="8 10">2 mM for hydrogencarbonate</KM>
    </kinetics>
    <phDependence>
        <text evidence="8 10">Optimum pH is 8.1-8.3.</text>
    </phDependence>
</comment>
<comment type="pathway">
    <text evidence="18">Amino-acid biosynthesis; L-arginine biosynthesis; carbamoyl phosphate from bicarbonate: step 1/1.</text>
</comment>
<comment type="subunit">
    <text evidence="11">Heterodimer composed of 2 chains; the small (or glutamine) chain promotes the hydrolysis of glutamine to ammonia, which is used by the large (or ammonia) chain to synthesize carbamoyl phosphate.</text>
</comment>
<comment type="subcellular location">
    <subcellularLocation>
        <location evidence="6 10 11">Mitochondrion matrix</location>
    </subcellularLocation>
</comment>
<comment type="domain">
    <text evidence="1">The large subunit is composed of 2 ATP-grasp domains that are involved in binding the 2 ATP molecules needed for carbamoyl phosphate synthesis. The N-terminal ATP-grasp domain (referred to as the carboxyphosphate synthetic component) catalyzes the ATP-dependent phosphorylation of hydrogencarbonate to carboxyphosphate and the subsequent nucleophilic attack by ammonia to form a carbamate intermediate. The C-terminal ATP-grasp domain (referred to as the carbamoyl phosphate synthetic component) then catalyzes the phosphorylation of carbamate with the second ATP to form the end product carbamoyl phosphate. The reactive and unstable enzyme intermediates are sequentially channeled from one active site to the next through the interior of the protein over a distance of at least 96 A.</text>
</comment>
<comment type="domain">
    <text evidence="2">The C-terminal MGS-like domain is required for catalytic function.</text>
</comment>
<comment type="miscellaneous">
    <text evidence="15 16 17 18">In N.crassa, this enzyme is synthesized by two pathway-specific (arginine and pyrimidine) genes under separate control. One is linked to the arginine pathway and is designated CPSase A (arg-2 and arg-3), it is localized to mitochondria and repressed by arginine. A second one, CPSase P, is part of a multifunctional protein (pyr-3) encoding 3 enzymatic activities of the pyrimidine pathway (GATase, CPSase, and ATCase); it is localized to the cytoplasm and feedback inhibited and repressed by pyrimidines. The carbamoyl phosphate synthesized by each synthase is channeled to its respective pathway, in contrast to Saccharomyces cerevisiae, in which the 2 synthases are localized to the cytoplasm and appear to contribute to the formation of a single cellular pool of carbamoyl phosphate.</text>
</comment>
<comment type="similarity">
    <text evidence="14">Belongs to the CarB family.</text>
</comment>